<evidence type="ECO:0000255" key="1">
    <source>
        <dbReference type="HAMAP-Rule" id="MF_00412"/>
    </source>
</evidence>
<comment type="function">
    <text evidence="1">Catalyzes the NADPH-dependent reduction of L-glutamate 5-phosphate into L-glutamate 5-semialdehyde and phosphate. The product spontaneously undergoes cyclization to form 1-pyrroline-5-carboxylate.</text>
</comment>
<comment type="catalytic activity">
    <reaction evidence="1">
        <text>L-glutamate 5-semialdehyde + phosphate + NADP(+) = L-glutamyl 5-phosphate + NADPH + H(+)</text>
        <dbReference type="Rhea" id="RHEA:19541"/>
        <dbReference type="ChEBI" id="CHEBI:15378"/>
        <dbReference type="ChEBI" id="CHEBI:43474"/>
        <dbReference type="ChEBI" id="CHEBI:57783"/>
        <dbReference type="ChEBI" id="CHEBI:58066"/>
        <dbReference type="ChEBI" id="CHEBI:58274"/>
        <dbReference type="ChEBI" id="CHEBI:58349"/>
        <dbReference type="EC" id="1.2.1.41"/>
    </reaction>
</comment>
<comment type="pathway">
    <text evidence="1">Amino-acid biosynthesis; L-proline biosynthesis; L-glutamate 5-semialdehyde from L-glutamate: step 2/2.</text>
</comment>
<comment type="subcellular location">
    <subcellularLocation>
        <location evidence="1">Cytoplasm</location>
    </subcellularLocation>
</comment>
<comment type="similarity">
    <text evidence="1">Belongs to the gamma-glutamyl phosphate reductase family.</text>
</comment>
<feature type="chain" id="PRO_0000230015" description="Gamma-glutamyl phosphate reductase">
    <location>
        <begin position="1"/>
        <end position="423"/>
    </location>
</feature>
<reference key="1">
    <citation type="journal article" date="2009" name="Genome Biol.">
        <title>Genomic and genetic analyses of diversity and plant interactions of Pseudomonas fluorescens.</title>
        <authorList>
            <person name="Silby M.W."/>
            <person name="Cerdeno-Tarraga A.M."/>
            <person name="Vernikos G.S."/>
            <person name="Giddens S.R."/>
            <person name="Jackson R.W."/>
            <person name="Preston G.M."/>
            <person name="Zhang X.-X."/>
            <person name="Moon C.D."/>
            <person name="Gehrig S.M."/>
            <person name="Godfrey S.A.C."/>
            <person name="Knight C.G."/>
            <person name="Malone J.G."/>
            <person name="Robinson Z."/>
            <person name="Spiers A.J."/>
            <person name="Harris S."/>
            <person name="Challis G.L."/>
            <person name="Yaxley A.M."/>
            <person name="Harris D."/>
            <person name="Seeger K."/>
            <person name="Murphy L."/>
            <person name="Rutter S."/>
            <person name="Squares R."/>
            <person name="Quail M.A."/>
            <person name="Saunders E."/>
            <person name="Mavromatis K."/>
            <person name="Brettin T.S."/>
            <person name="Bentley S.D."/>
            <person name="Hothersall J."/>
            <person name="Stephens E."/>
            <person name="Thomas C.M."/>
            <person name="Parkhill J."/>
            <person name="Levy S.B."/>
            <person name="Rainey P.B."/>
            <person name="Thomson N.R."/>
        </authorList>
    </citation>
    <scope>NUCLEOTIDE SEQUENCE [LARGE SCALE GENOMIC DNA]</scope>
    <source>
        <strain>Pf0-1</strain>
    </source>
</reference>
<gene>
    <name evidence="1" type="primary">proA</name>
    <name type="ordered locus">Pfl01_4974</name>
</gene>
<sequence length="423" mass="45307">MTESVLDYMTRLGRAAREASRVIGRASTAQKNRALLAAANALDAARAELAAANEQDLATGRANGLEPALLERLELTPARIDGMIVGLRQVAALPDPVGAIRDMSFRPSGIQVGKMRVPLGVIGIIYESRPNVTIDAASLCLKSGNATILRGGSEAIHSNRAIAACIQRGLAAAELPAAVVQVVETTDRAAVGALITMPEYVDVIVPRGGRGLIERISRDARVPVIKHLDGICHVYVSEHADLPKAQRIAFNAKTYRYGICGAMETLLVDQRVAKDFLPSMAKQFREKGVELRGCERTRAIIEAVAATEEDWSTEYLAPILSIRVVDGLDQAIEHINHFGSHHTDSIVSENLADTRQFVAQVDSASVMINTPTCFADGFEYGLGAEIGISTDKLHARGPVGLEGLTCEKYIVVGDGQLRGQATV</sequence>
<keyword id="KW-0028">Amino-acid biosynthesis</keyword>
<keyword id="KW-0963">Cytoplasm</keyword>
<keyword id="KW-0521">NADP</keyword>
<keyword id="KW-0560">Oxidoreductase</keyword>
<keyword id="KW-0641">Proline biosynthesis</keyword>
<accession>Q3K693</accession>
<proteinExistence type="inferred from homology"/>
<dbReference type="EC" id="1.2.1.41" evidence="1"/>
<dbReference type="EMBL" id="CP000094">
    <property type="protein sequence ID" value="ABA76711.1"/>
    <property type="molecule type" value="Genomic_DNA"/>
</dbReference>
<dbReference type="RefSeq" id="WP_011336103.1">
    <property type="nucleotide sequence ID" value="NC_007492.2"/>
</dbReference>
<dbReference type="SMR" id="Q3K693"/>
<dbReference type="KEGG" id="pfo:Pfl01_4974"/>
<dbReference type="eggNOG" id="COG0014">
    <property type="taxonomic scope" value="Bacteria"/>
</dbReference>
<dbReference type="HOGENOM" id="CLU_030231_0_0_6"/>
<dbReference type="UniPathway" id="UPA00098">
    <property type="reaction ID" value="UER00360"/>
</dbReference>
<dbReference type="Proteomes" id="UP000002704">
    <property type="component" value="Chromosome"/>
</dbReference>
<dbReference type="GO" id="GO:0005737">
    <property type="term" value="C:cytoplasm"/>
    <property type="evidence" value="ECO:0007669"/>
    <property type="project" value="UniProtKB-SubCell"/>
</dbReference>
<dbReference type="GO" id="GO:0004350">
    <property type="term" value="F:glutamate-5-semialdehyde dehydrogenase activity"/>
    <property type="evidence" value="ECO:0007669"/>
    <property type="project" value="UniProtKB-UniRule"/>
</dbReference>
<dbReference type="GO" id="GO:0050661">
    <property type="term" value="F:NADP binding"/>
    <property type="evidence" value="ECO:0007669"/>
    <property type="project" value="InterPro"/>
</dbReference>
<dbReference type="GO" id="GO:0055129">
    <property type="term" value="P:L-proline biosynthetic process"/>
    <property type="evidence" value="ECO:0007669"/>
    <property type="project" value="UniProtKB-UniRule"/>
</dbReference>
<dbReference type="CDD" id="cd07079">
    <property type="entry name" value="ALDH_F18-19_ProA-GPR"/>
    <property type="match status" value="1"/>
</dbReference>
<dbReference type="FunFam" id="3.40.309.10:FF:000006">
    <property type="entry name" value="Gamma-glutamyl phosphate reductase"/>
    <property type="match status" value="1"/>
</dbReference>
<dbReference type="Gene3D" id="3.40.605.10">
    <property type="entry name" value="Aldehyde Dehydrogenase, Chain A, domain 1"/>
    <property type="match status" value="1"/>
</dbReference>
<dbReference type="Gene3D" id="3.40.309.10">
    <property type="entry name" value="Aldehyde Dehydrogenase, Chain A, domain 2"/>
    <property type="match status" value="1"/>
</dbReference>
<dbReference type="HAMAP" id="MF_00412">
    <property type="entry name" value="ProA"/>
    <property type="match status" value="1"/>
</dbReference>
<dbReference type="InterPro" id="IPR016161">
    <property type="entry name" value="Ald_DH/histidinol_DH"/>
</dbReference>
<dbReference type="InterPro" id="IPR016163">
    <property type="entry name" value="Ald_DH_C"/>
</dbReference>
<dbReference type="InterPro" id="IPR016162">
    <property type="entry name" value="Ald_DH_N"/>
</dbReference>
<dbReference type="InterPro" id="IPR015590">
    <property type="entry name" value="Aldehyde_DH_dom"/>
</dbReference>
<dbReference type="InterPro" id="IPR020593">
    <property type="entry name" value="G-glutamylP_reductase_CS"/>
</dbReference>
<dbReference type="InterPro" id="IPR012134">
    <property type="entry name" value="Glu-5-SA_DH"/>
</dbReference>
<dbReference type="InterPro" id="IPR000965">
    <property type="entry name" value="GPR_dom"/>
</dbReference>
<dbReference type="NCBIfam" id="NF001221">
    <property type="entry name" value="PRK00197.1"/>
    <property type="match status" value="1"/>
</dbReference>
<dbReference type="NCBIfam" id="TIGR00407">
    <property type="entry name" value="proA"/>
    <property type="match status" value="1"/>
</dbReference>
<dbReference type="PANTHER" id="PTHR11063:SF8">
    <property type="entry name" value="DELTA-1-PYRROLINE-5-CARBOXYLATE SYNTHASE"/>
    <property type="match status" value="1"/>
</dbReference>
<dbReference type="PANTHER" id="PTHR11063">
    <property type="entry name" value="GLUTAMATE SEMIALDEHYDE DEHYDROGENASE"/>
    <property type="match status" value="1"/>
</dbReference>
<dbReference type="Pfam" id="PF00171">
    <property type="entry name" value="Aldedh"/>
    <property type="match status" value="2"/>
</dbReference>
<dbReference type="PIRSF" id="PIRSF000151">
    <property type="entry name" value="GPR"/>
    <property type="match status" value="1"/>
</dbReference>
<dbReference type="SUPFAM" id="SSF53720">
    <property type="entry name" value="ALDH-like"/>
    <property type="match status" value="1"/>
</dbReference>
<dbReference type="PROSITE" id="PS01223">
    <property type="entry name" value="PROA"/>
    <property type="match status" value="1"/>
</dbReference>
<protein>
    <recommendedName>
        <fullName evidence="1">Gamma-glutamyl phosphate reductase</fullName>
        <shortName evidence="1">GPR</shortName>
        <ecNumber evidence="1">1.2.1.41</ecNumber>
    </recommendedName>
    <alternativeName>
        <fullName evidence="1">Glutamate-5-semialdehyde dehydrogenase</fullName>
    </alternativeName>
    <alternativeName>
        <fullName evidence="1">Glutamyl-gamma-semialdehyde dehydrogenase</fullName>
        <shortName evidence="1">GSA dehydrogenase</shortName>
    </alternativeName>
</protein>
<organism>
    <name type="scientific">Pseudomonas fluorescens (strain Pf0-1)</name>
    <dbReference type="NCBI Taxonomy" id="205922"/>
    <lineage>
        <taxon>Bacteria</taxon>
        <taxon>Pseudomonadati</taxon>
        <taxon>Pseudomonadota</taxon>
        <taxon>Gammaproteobacteria</taxon>
        <taxon>Pseudomonadales</taxon>
        <taxon>Pseudomonadaceae</taxon>
        <taxon>Pseudomonas</taxon>
    </lineage>
</organism>
<name>PROA_PSEPF</name>